<keyword id="KW-0238">DNA-binding</keyword>
<keyword id="KW-0539">Nucleus</keyword>
<keyword id="KW-1185">Reference proteome</keyword>
<comment type="function">
    <text evidence="1">May function as a transcription factor.</text>
</comment>
<comment type="subunit">
    <text evidence="1">Efficient DNA binding requires dimerization with another bHLH protein. Binds DNA as a heterodimer with MAX (By similarity).</text>
</comment>
<comment type="subcellular location">
    <subcellularLocation>
        <location>Nucleus</location>
    </subcellularLocation>
</comment>
<comment type="tissue specificity">
    <text evidence="2">Barely detectable in most tissues assayed.</text>
</comment>
<comment type="developmental stage">
    <text evidence="2">Expression increases significantly between 6 and 12 hours, a period characterized by late gastrulation, early central nervous system development and early somite formation. Levels increase during later stages marked by rapid growth and development of the brain, and formation of rudimentary visual and auditory organs and myotomes (12 to 24 hours).</text>
</comment>
<proteinExistence type="evidence at transcript level"/>
<protein>
    <recommendedName>
        <fullName>N-myc protein</fullName>
        <shortName>zN-Myc</shortName>
    </recommendedName>
</protein>
<gene>
    <name type="primary">mycn</name>
    <name type="synonym">nmyc1</name>
</gene>
<name>MYCN_DANRE</name>
<evidence type="ECO:0000250" key="1"/>
<evidence type="ECO:0000269" key="2">
    <source>
    </source>
</evidence>
<evidence type="ECO:0000303" key="3">
    <source>
    </source>
</evidence>
<evidence type="ECO:0000305" key="4"/>
<dbReference type="PIR" id="D48059">
    <property type="entry name" value="D48059"/>
</dbReference>
<dbReference type="STRING" id="7955.ENSDARP00000026640"/>
<dbReference type="PaxDb" id="7955-ENSDARP00000026640"/>
<dbReference type="AGR" id="ZFIN:ZDB-GENE-020711-1"/>
<dbReference type="ZFIN" id="ZDB-GENE-020711-1">
    <property type="gene designation" value="mycn"/>
</dbReference>
<dbReference type="eggNOG" id="KOG2588">
    <property type="taxonomic scope" value="Eukaryota"/>
</dbReference>
<dbReference type="InParanoid" id="Q9PSJ0"/>
<dbReference type="PRO" id="PR:Q9PSJ0"/>
<dbReference type="Proteomes" id="UP000000437">
    <property type="component" value="Unplaced"/>
</dbReference>
<dbReference type="GO" id="GO:0005634">
    <property type="term" value="C:nucleus"/>
    <property type="evidence" value="ECO:0007669"/>
    <property type="project" value="UniProtKB-SubCell"/>
</dbReference>
<dbReference type="GO" id="GO:0003677">
    <property type="term" value="F:DNA binding"/>
    <property type="evidence" value="ECO:0007669"/>
    <property type="project" value="UniProtKB-KW"/>
</dbReference>
<dbReference type="GO" id="GO:0003700">
    <property type="term" value="F:DNA-binding transcription factor activity"/>
    <property type="evidence" value="ECO:0007669"/>
    <property type="project" value="InterPro"/>
</dbReference>
<dbReference type="InterPro" id="IPR050433">
    <property type="entry name" value="Myc_transcription_factors"/>
</dbReference>
<dbReference type="InterPro" id="IPR012682">
    <property type="entry name" value="Tscrpt_reg_Myc_N"/>
</dbReference>
<dbReference type="PANTHER" id="PTHR45851">
    <property type="entry name" value="MYC PROTO-ONCOGENE"/>
    <property type="match status" value="1"/>
</dbReference>
<dbReference type="Pfam" id="PF01056">
    <property type="entry name" value="Myc_N"/>
    <property type="match status" value="1"/>
</dbReference>
<feature type="chain" id="PRO_0000127329" description="N-myc protein">
    <location>
        <begin position="1" status="less than"/>
        <end position="93" status="greater than"/>
    </location>
</feature>
<feature type="non-terminal residue" evidence="3">
    <location>
        <position position="1"/>
    </location>
</feature>
<feature type="non-terminal residue" evidence="3">
    <location>
        <position position="93"/>
    </location>
</feature>
<sequence>EDIWKKFELLPTPPLSPSRAALPGDPGELGAVAGDCSLMGFGLTDPLDWASELLLLPGDDIWGASDGDLFGSVLDTTDNSIIIQDCMWSGFSA</sequence>
<reference evidence="4" key="1">
    <citation type="journal article" date="1993" name="Mol. Cell. Biol.">
        <title>Zebra fish myc family and max genes: differential expression and oncogenic activity throughout vertebrate evolution.</title>
        <authorList>
            <person name="Schreiber-Agus N."/>
            <person name="Horner J."/>
            <person name="Torres R."/>
            <person name="Chiu F.-C."/>
            <person name="DePinho R.A."/>
        </authorList>
    </citation>
    <scope>NUCLEOTIDE SEQUENCE</scope>
    <scope>TISSUE SPECIFICITY</scope>
    <scope>DEVELOPMENTAL STAGE</scope>
    <source>
        <tissue evidence="2">Embryo</tissue>
    </source>
</reference>
<organism>
    <name type="scientific">Danio rerio</name>
    <name type="common">Zebrafish</name>
    <name type="synonym">Brachydanio rerio</name>
    <dbReference type="NCBI Taxonomy" id="7955"/>
    <lineage>
        <taxon>Eukaryota</taxon>
        <taxon>Metazoa</taxon>
        <taxon>Chordata</taxon>
        <taxon>Craniata</taxon>
        <taxon>Vertebrata</taxon>
        <taxon>Euteleostomi</taxon>
        <taxon>Actinopterygii</taxon>
        <taxon>Neopterygii</taxon>
        <taxon>Teleostei</taxon>
        <taxon>Ostariophysi</taxon>
        <taxon>Cypriniformes</taxon>
        <taxon>Danionidae</taxon>
        <taxon>Danioninae</taxon>
        <taxon>Danio</taxon>
    </lineage>
</organism>
<accession>Q9PSJ0</accession>